<dbReference type="EMBL" id="AL445067">
    <property type="protein sequence ID" value="CAC12392.1"/>
    <property type="molecule type" value="Genomic_DNA"/>
</dbReference>
<dbReference type="RefSeq" id="WP_010901676.1">
    <property type="nucleotide sequence ID" value="NC_002578.1"/>
</dbReference>
<dbReference type="SMR" id="Q9HIR2"/>
<dbReference type="FunCoup" id="Q9HIR2">
    <property type="interactions" value="162"/>
</dbReference>
<dbReference type="STRING" id="273075.gene:9572491"/>
<dbReference type="PaxDb" id="273075-Ta1268"/>
<dbReference type="EnsemblBacteria" id="CAC12392">
    <property type="protein sequence ID" value="CAC12392"/>
    <property type="gene ID" value="CAC12392"/>
</dbReference>
<dbReference type="KEGG" id="tac:Ta1268"/>
<dbReference type="eggNOG" id="arCOG04067">
    <property type="taxonomic scope" value="Archaea"/>
</dbReference>
<dbReference type="HOGENOM" id="CLU_036235_0_1_2"/>
<dbReference type="InParanoid" id="Q9HIR2"/>
<dbReference type="OrthoDB" id="5987at2157"/>
<dbReference type="Proteomes" id="UP000001024">
    <property type="component" value="Chromosome"/>
</dbReference>
<dbReference type="GO" id="GO:0022625">
    <property type="term" value="C:cytosolic large ribosomal subunit"/>
    <property type="evidence" value="ECO:0007669"/>
    <property type="project" value="TreeGrafter"/>
</dbReference>
<dbReference type="GO" id="GO:0019843">
    <property type="term" value="F:rRNA binding"/>
    <property type="evidence" value="ECO:0007669"/>
    <property type="project" value="UniProtKB-UniRule"/>
</dbReference>
<dbReference type="GO" id="GO:0003735">
    <property type="term" value="F:structural constituent of ribosome"/>
    <property type="evidence" value="ECO:0007669"/>
    <property type="project" value="InterPro"/>
</dbReference>
<dbReference type="GO" id="GO:0002181">
    <property type="term" value="P:cytoplasmic translation"/>
    <property type="evidence" value="ECO:0007669"/>
    <property type="project" value="TreeGrafter"/>
</dbReference>
<dbReference type="Gene3D" id="2.30.30.30">
    <property type="match status" value="1"/>
</dbReference>
<dbReference type="Gene3D" id="2.40.50.140">
    <property type="entry name" value="Nucleic acid-binding proteins"/>
    <property type="match status" value="1"/>
</dbReference>
<dbReference type="Gene3D" id="4.10.950.10">
    <property type="entry name" value="Ribosomal protein L2, domain 3"/>
    <property type="match status" value="1"/>
</dbReference>
<dbReference type="HAMAP" id="MF_01320_A">
    <property type="entry name" value="Ribosomal_uL2_A"/>
    <property type="match status" value="1"/>
</dbReference>
<dbReference type="InterPro" id="IPR012340">
    <property type="entry name" value="NA-bd_OB-fold"/>
</dbReference>
<dbReference type="InterPro" id="IPR014722">
    <property type="entry name" value="Rib_uL2_dom2"/>
</dbReference>
<dbReference type="InterPro" id="IPR002171">
    <property type="entry name" value="Ribosomal_uL2"/>
</dbReference>
<dbReference type="InterPro" id="IPR023672">
    <property type="entry name" value="Ribosomal_uL2_arc_euk"/>
</dbReference>
<dbReference type="InterPro" id="IPR022669">
    <property type="entry name" value="Ribosomal_uL2_C"/>
</dbReference>
<dbReference type="InterPro" id="IPR014726">
    <property type="entry name" value="Ribosomal_uL2_dom3"/>
</dbReference>
<dbReference type="InterPro" id="IPR008991">
    <property type="entry name" value="Translation_prot_SH3-like_sf"/>
</dbReference>
<dbReference type="NCBIfam" id="NF007180">
    <property type="entry name" value="PRK09612.1"/>
    <property type="match status" value="1"/>
</dbReference>
<dbReference type="PANTHER" id="PTHR13691:SF16">
    <property type="entry name" value="LARGE RIBOSOMAL SUBUNIT PROTEIN UL2"/>
    <property type="match status" value="1"/>
</dbReference>
<dbReference type="PANTHER" id="PTHR13691">
    <property type="entry name" value="RIBOSOMAL PROTEIN L2"/>
    <property type="match status" value="1"/>
</dbReference>
<dbReference type="Pfam" id="PF03947">
    <property type="entry name" value="Ribosomal_L2_C"/>
    <property type="match status" value="1"/>
</dbReference>
<dbReference type="PIRSF" id="PIRSF002158">
    <property type="entry name" value="Ribosomal_L2"/>
    <property type="match status" value="1"/>
</dbReference>
<dbReference type="SMART" id="SM01383">
    <property type="entry name" value="Ribosomal_L2"/>
    <property type="match status" value="1"/>
</dbReference>
<dbReference type="SMART" id="SM01382">
    <property type="entry name" value="Ribosomal_L2_C"/>
    <property type="match status" value="1"/>
</dbReference>
<dbReference type="SUPFAM" id="SSF50249">
    <property type="entry name" value="Nucleic acid-binding proteins"/>
    <property type="match status" value="1"/>
</dbReference>
<dbReference type="SUPFAM" id="SSF50104">
    <property type="entry name" value="Translation proteins SH3-like domain"/>
    <property type="match status" value="1"/>
</dbReference>
<accession>Q9HIR2</accession>
<name>RL2_THEAC</name>
<proteinExistence type="inferred from homology"/>
<evidence type="ECO:0000255" key="1">
    <source>
        <dbReference type="HAMAP-Rule" id="MF_01320"/>
    </source>
</evidence>
<evidence type="ECO:0000256" key="2">
    <source>
        <dbReference type="SAM" id="MobiDB-lite"/>
    </source>
</evidence>
<evidence type="ECO:0000305" key="3"/>
<comment type="function">
    <text evidence="1">One of the primary rRNA binding proteins. Required for association of the 30S and 50S subunits to form the 70S ribosome, for tRNA binding and peptide bond formation. It has been suggested to have peptidyltransferase activity; this is somewhat controversial. Makes several contacts with the 16S rRNA in the 70S ribosome.</text>
</comment>
<comment type="subunit">
    <text evidence="1">Part of the 50S ribosomal subunit. Forms a bridge to the 30S subunit in the 70S ribosome.</text>
</comment>
<comment type="similarity">
    <text evidence="1">Belongs to the universal ribosomal protein uL2 family.</text>
</comment>
<sequence length="233" mass="25001">MGKHIIPQRRGHGSLVYRSPSHRHITEVKHVDQGTYVIKDIIHAPGRNAPLLELMGSDGKKAYQIAFTGAFVGQNIVAGNVDSVSPGTTTVLANIPDGSYVYNIESSPGDGGEFCRSAGTFALVVSHGQHVTLKLPSGRMRDFDPRCRATLGVVAASGIKDPPILKAGTHVHYLRSKAKRPYTVRGVAMNAVNHPHGGGNHQHVGRPSTVGRNAPPGRKVGRLSPKRRRVNGR</sequence>
<organism>
    <name type="scientific">Thermoplasma acidophilum (strain ATCC 25905 / DSM 1728 / JCM 9062 / NBRC 15155 / AMRC-C165)</name>
    <dbReference type="NCBI Taxonomy" id="273075"/>
    <lineage>
        <taxon>Archaea</taxon>
        <taxon>Methanobacteriati</taxon>
        <taxon>Thermoplasmatota</taxon>
        <taxon>Thermoplasmata</taxon>
        <taxon>Thermoplasmatales</taxon>
        <taxon>Thermoplasmataceae</taxon>
        <taxon>Thermoplasma</taxon>
    </lineage>
</organism>
<feature type="chain" id="PRO_0000129729" description="Large ribosomal subunit protein uL2">
    <location>
        <begin position="1"/>
        <end position="233"/>
    </location>
</feature>
<feature type="region of interest" description="Disordered" evidence="2">
    <location>
        <begin position="195"/>
        <end position="233"/>
    </location>
</feature>
<feature type="compositionally biased region" description="Basic residues" evidence="2">
    <location>
        <begin position="219"/>
        <end position="233"/>
    </location>
</feature>
<reference key="1">
    <citation type="journal article" date="2000" name="Nature">
        <title>The genome sequence of the thermoacidophilic scavenger Thermoplasma acidophilum.</title>
        <authorList>
            <person name="Ruepp A."/>
            <person name="Graml W."/>
            <person name="Santos-Martinez M.-L."/>
            <person name="Koretke K.K."/>
            <person name="Volker C."/>
            <person name="Mewes H.-W."/>
            <person name="Frishman D."/>
            <person name="Stocker S."/>
            <person name="Lupas A.N."/>
            <person name="Baumeister W."/>
        </authorList>
    </citation>
    <scope>NUCLEOTIDE SEQUENCE [LARGE SCALE GENOMIC DNA]</scope>
    <source>
        <strain>ATCC 25905 / DSM 1728 / JCM 9062 / NBRC 15155 / AMRC-C165</strain>
    </source>
</reference>
<keyword id="KW-1185">Reference proteome</keyword>
<keyword id="KW-0687">Ribonucleoprotein</keyword>
<keyword id="KW-0689">Ribosomal protein</keyword>
<keyword id="KW-0694">RNA-binding</keyword>
<keyword id="KW-0699">rRNA-binding</keyword>
<protein>
    <recommendedName>
        <fullName evidence="1">Large ribosomal subunit protein uL2</fullName>
    </recommendedName>
    <alternativeName>
        <fullName evidence="3">50S ribosomal protein L2</fullName>
    </alternativeName>
</protein>
<gene>
    <name evidence="1" type="primary">rpl2</name>
    <name type="ordered locus">Ta1268</name>
</gene>